<accession>P11055</accession>
<accession>Q15492</accession>
<organism>
    <name type="scientific">Homo sapiens</name>
    <name type="common">Human</name>
    <dbReference type="NCBI Taxonomy" id="9606"/>
    <lineage>
        <taxon>Eukaryota</taxon>
        <taxon>Metazoa</taxon>
        <taxon>Chordata</taxon>
        <taxon>Craniata</taxon>
        <taxon>Vertebrata</taxon>
        <taxon>Euteleostomi</taxon>
        <taxon>Mammalia</taxon>
        <taxon>Eutheria</taxon>
        <taxon>Euarchontoglires</taxon>
        <taxon>Primates</taxon>
        <taxon>Haplorrhini</taxon>
        <taxon>Catarrhini</taxon>
        <taxon>Hominidae</taxon>
        <taxon>Homo</taxon>
    </lineage>
</organism>
<dbReference type="EMBL" id="X13988">
    <property type="protein sequence ID" value="CAA32167.1"/>
    <property type="molecule type" value="mRNA"/>
</dbReference>
<dbReference type="EMBL" id="AC002347">
    <property type="status" value="NOT_ANNOTATED_CDS"/>
    <property type="molecule type" value="Genomic_DNA"/>
</dbReference>
<dbReference type="EMBL" id="X13100">
    <property type="protein sequence ID" value="CAA31492.1"/>
    <property type="molecule type" value="mRNA"/>
</dbReference>
<dbReference type="EMBL" id="X51593">
    <property type="protein sequence ID" value="CAA35942.1"/>
    <property type="molecule type" value="mRNA"/>
</dbReference>
<dbReference type="EMBL" id="X15696">
    <property type="protein sequence ID" value="CAA33731.1"/>
    <property type="molecule type" value="mRNA"/>
</dbReference>
<dbReference type="CCDS" id="CCDS11157.1"/>
<dbReference type="PIR" id="S04090">
    <property type="entry name" value="S04090"/>
</dbReference>
<dbReference type="RefSeq" id="NP_002461.2">
    <property type="nucleotide sequence ID" value="NM_002470.4"/>
</dbReference>
<dbReference type="RefSeq" id="XP_011522172.1">
    <property type="nucleotide sequence ID" value="XM_011523870.4"/>
</dbReference>
<dbReference type="RefSeq" id="XP_011522173.1">
    <property type="nucleotide sequence ID" value="XM_011523871.3"/>
</dbReference>
<dbReference type="RefSeq" id="XP_047292083.1">
    <property type="nucleotide sequence ID" value="XM_047436127.1"/>
</dbReference>
<dbReference type="SMR" id="P11055"/>
<dbReference type="BioGRID" id="110706">
    <property type="interactions" value="53"/>
</dbReference>
<dbReference type="FunCoup" id="P11055">
    <property type="interactions" value="319"/>
</dbReference>
<dbReference type="IntAct" id="P11055">
    <property type="interactions" value="30"/>
</dbReference>
<dbReference type="MINT" id="P11055"/>
<dbReference type="STRING" id="9606.ENSP00000464317"/>
<dbReference type="iPTMnet" id="P11055"/>
<dbReference type="PhosphoSitePlus" id="P11055"/>
<dbReference type="BioMuta" id="MYH3"/>
<dbReference type="DMDM" id="251757455"/>
<dbReference type="jPOST" id="P11055"/>
<dbReference type="MassIVE" id="P11055"/>
<dbReference type="PaxDb" id="9606-ENSP00000464317"/>
<dbReference type="PeptideAtlas" id="P11055"/>
<dbReference type="ProteomicsDB" id="52691"/>
<dbReference type="Pumba" id="P11055"/>
<dbReference type="Antibodypedia" id="12917">
    <property type="antibodies" value="107 antibodies from 29 providers"/>
</dbReference>
<dbReference type="DNASU" id="4621"/>
<dbReference type="Ensembl" id="ENST00000583535.6">
    <property type="protein sequence ID" value="ENSP00000464317.1"/>
    <property type="gene ID" value="ENSG00000109063.15"/>
</dbReference>
<dbReference type="GeneID" id="4621"/>
<dbReference type="KEGG" id="hsa:4621"/>
<dbReference type="MANE-Select" id="ENST00000583535.6">
    <property type="protein sequence ID" value="ENSP00000464317.1"/>
    <property type="RefSeq nucleotide sequence ID" value="NM_002470.4"/>
    <property type="RefSeq protein sequence ID" value="NP_002461.2"/>
</dbReference>
<dbReference type="UCSC" id="uc002gmq.3">
    <property type="organism name" value="human"/>
</dbReference>
<dbReference type="AGR" id="HGNC:7573"/>
<dbReference type="CTD" id="4621"/>
<dbReference type="DisGeNET" id="4621"/>
<dbReference type="GeneCards" id="MYH3"/>
<dbReference type="HGNC" id="HGNC:7573">
    <property type="gene designation" value="MYH3"/>
</dbReference>
<dbReference type="HPA" id="ENSG00000109063">
    <property type="expression patterns" value="Tissue enhanced (prostate, seminal vesicle, skeletal muscle)"/>
</dbReference>
<dbReference type="MalaCards" id="MYH3"/>
<dbReference type="MIM" id="160720">
    <property type="type" value="gene"/>
</dbReference>
<dbReference type="MIM" id="178110">
    <property type="type" value="phenotype"/>
</dbReference>
<dbReference type="MIM" id="193700">
    <property type="type" value="phenotype"/>
</dbReference>
<dbReference type="MIM" id="618436">
    <property type="type" value="phenotype"/>
</dbReference>
<dbReference type="MIM" id="618469">
    <property type="type" value="phenotype"/>
</dbReference>
<dbReference type="neXtProt" id="NX_P11055"/>
<dbReference type="OpenTargets" id="ENSG00000109063"/>
<dbReference type="Orphanet" id="65743">
    <property type="disease" value="Autosomal dominant multiple pterygium syndrome"/>
</dbReference>
<dbReference type="Orphanet" id="2990">
    <property type="disease" value="Autosomal recessive multiple pterygium syndrome"/>
</dbReference>
<dbReference type="Orphanet" id="1146">
    <property type="disease" value="Distal arthrogryposis type 1"/>
</dbReference>
<dbReference type="Orphanet" id="2053">
    <property type="disease" value="Freeman-Sheldon syndrome"/>
</dbReference>
<dbReference type="Orphanet" id="1147">
    <property type="disease" value="Sheldon-Hall syndrome"/>
</dbReference>
<dbReference type="Orphanet" id="3275">
    <property type="disease" value="Spondylocarpotarsal synostosis"/>
</dbReference>
<dbReference type="PharmGKB" id="PA31370"/>
<dbReference type="VEuPathDB" id="HostDB:ENSG00000109063"/>
<dbReference type="eggNOG" id="KOG0161">
    <property type="taxonomic scope" value="Eukaryota"/>
</dbReference>
<dbReference type="GeneTree" id="ENSGT00940000161575"/>
<dbReference type="HOGENOM" id="CLU_000192_8_0_1"/>
<dbReference type="InParanoid" id="P11055"/>
<dbReference type="OMA" id="RMVIHES"/>
<dbReference type="OrthoDB" id="312459at2759"/>
<dbReference type="PAN-GO" id="P11055">
    <property type="GO annotations" value="6 GO annotations based on evolutionary models"/>
</dbReference>
<dbReference type="PhylomeDB" id="P11055"/>
<dbReference type="TreeFam" id="TF314375"/>
<dbReference type="PathwayCommons" id="P11055"/>
<dbReference type="Reactome" id="R-HSA-390522">
    <property type="pathway name" value="Striated Muscle Contraction"/>
</dbReference>
<dbReference type="SignaLink" id="P11055"/>
<dbReference type="SIGNOR" id="P11055"/>
<dbReference type="BioGRID-ORCS" id="4621">
    <property type="hits" value="7 hits in 1144 CRISPR screens"/>
</dbReference>
<dbReference type="ChiTaRS" id="MYH3">
    <property type="organism name" value="human"/>
</dbReference>
<dbReference type="GeneWiki" id="MYH3"/>
<dbReference type="GenomeRNAi" id="4621"/>
<dbReference type="Pharos" id="P11055">
    <property type="development level" value="Tbio"/>
</dbReference>
<dbReference type="PRO" id="PR:P11055"/>
<dbReference type="Proteomes" id="UP000005640">
    <property type="component" value="Chromosome 17"/>
</dbReference>
<dbReference type="RNAct" id="P11055">
    <property type="molecule type" value="protein"/>
</dbReference>
<dbReference type="Bgee" id="ENSG00000109063">
    <property type="expression patterns" value="Expressed in left testis and 123 other cell types or tissues"/>
</dbReference>
<dbReference type="GO" id="GO:0005737">
    <property type="term" value="C:cytoplasm"/>
    <property type="evidence" value="ECO:0000318"/>
    <property type="project" value="GO_Central"/>
</dbReference>
<dbReference type="GO" id="GO:0005829">
    <property type="term" value="C:cytosol"/>
    <property type="evidence" value="ECO:0000304"/>
    <property type="project" value="Reactome"/>
</dbReference>
<dbReference type="GO" id="GO:0070062">
    <property type="term" value="C:extracellular exosome"/>
    <property type="evidence" value="ECO:0007005"/>
    <property type="project" value="UniProtKB"/>
</dbReference>
<dbReference type="GO" id="GO:0005859">
    <property type="term" value="C:muscle myosin complex"/>
    <property type="evidence" value="ECO:0000303"/>
    <property type="project" value="BHF-UCL"/>
</dbReference>
<dbReference type="GO" id="GO:0032982">
    <property type="term" value="C:myosin filament"/>
    <property type="evidence" value="ECO:0000318"/>
    <property type="project" value="GO_Central"/>
</dbReference>
<dbReference type="GO" id="GO:0016460">
    <property type="term" value="C:myosin II complex"/>
    <property type="evidence" value="ECO:0000318"/>
    <property type="project" value="GO_Central"/>
</dbReference>
<dbReference type="GO" id="GO:0030017">
    <property type="term" value="C:sarcomere"/>
    <property type="evidence" value="ECO:0000303"/>
    <property type="project" value="BHF-UCL"/>
</dbReference>
<dbReference type="GO" id="GO:0051015">
    <property type="term" value="F:actin filament binding"/>
    <property type="evidence" value="ECO:0000315"/>
    <property type="project" value="BHF-UCL"/>
</dbReference>
<dbReference type="GO" id="GO:0005524">
    <property type="term" value="F:ATP binding"/>
    <property type="evidence" value="ECO:0007669"/>
    <property type="project" value="UniProtKB-KW"/>
</dbReference>
<dbReference type="GO" id="GO:0016887">
    <property type="term" value="F:ATP hydrolysis activity"/>
    <property type="evidence" value="ECO:0000315"/>
    <property type="project" value="BHF-UCL"/>
</dbReference>
<dbReference type="GO" id="GO:0005516">
    <property type="term" value="F:calmodulin binding"/>
    <property type="evidence" value="ECO:0000303"/>
    <property type="project" value="BHF-UCL"/>
</dbReference>
<dbReference type="GO" id="GO:0000146">
    <property type="term" value="F:microfilament motor activity"/>
    <property type="evidence" value="ECO:0000315"/>
    <property type="project" value="BHF-UCL"/>
</dbReference>
<dbReference type="GO" id="GO:0017018">
    <property type="term" value="F:myosin phosphatase activity"/>
    <property type="evidence" value="ECO:0000304"/>
    <property type="project" value="Reactome"/>
</dbReference>
<dbReference type="GO" id="GO:0030048">
    <property type="term" value="P:actin filament-based movement"/>
    <property type="evidence" value="ECO:0000303"/>
    <property type="project" value="UniProtKB"/>
</dbReference>
<dbReference type="GO" id="GO:0046034">
    <property type="term" value="P:ATP metabolic process"/>
    <property type="evidence" value="ECO:0000315"/>
    <property type="project" value="BHF-UCL"/>
</dbReference>
<dbReference type="GO" id="GO:0030326">
    <property type="term" value="P:embryonic limb morphogenesis"/>
    <property type="evidence" value="ECO:0000305"/>
    <property type="project" value="BHF-UCL"/>
</dbReference>
<dbReference type="GO" id="GO:0060325">
    <property type="term" value="P:face morphogenesis"/>
    <property type="evidence" value="ECO:0000305"/>
    <property type="project" value="BHF-UCL"/>
</dbReference>
<dbReference type="GO" id="GO:0006936">
    <property type="term" value="P:muscle contraction"/>
    <property type="evidence" value="ECO:0000318"/>
    <property type="project" value="GO_Central"/>
</dbReference>
<dbReference type="GO" id="GO:0030049">
    <property type="term" value="P:muscle filament sliding"/>
    <property type="evidence" value="ECO:0000304"/>
    <property type="project" value="Reactome"/>
</dbReference>
<dbReference type="GO" id="GO:0007517">
    <property type="term" value="P:muscle organ development"/>
    <property type="evidence" value="ECO:0000304"/>
    <property type="project" value="ProtInc"/>
</dbReference>
<dbReference type="GO" id="GO:0045214">
    <property type="term" value="P:sarcomere organization"/>
    <property type="evidence" value="ECO:0000303"/>
    <property type="project" value="BHF-UCL"/>
</dbReference>
<dbReference type="GO" id="GO:0003009">
    <property type="term" value="P:skeletal muscle contraction"/>
    <property type="evidence" value="ECO:0000315"/>
    <property type="project" value="BHF-UCL"/>
</dbReference>
<dbReference type="CDD" id="cd14913">
    <property type="entry name" value="MYSc_Myh3"/>
    <property type="match status" value="1"/>
</dbReference>
<dbReference type="FunFam" id="1.10.10.820:FF:000001">
    <property type="entry name" value="Myosin heavy chain"/>
    <property type="match status" value="1"/>
</dbReference>
<dbReference type="FunFam" id="1.20.5.340:FF:000002">
    <property type="entry name" value="Myosin heavy chain"/>
    <property type="match status" value="1"/>
</dbReference>
<dbReference type="FunFam" id="1.20.5.340:FF:000003">
    <property type="entry name" value="Myosin heavy chain"/>
    <property type="match status" value="1"/>
</dbReference>
<dbReference type="FunFam" id="1.20.5.340:FF:000004">
    <property type="entry name" value="Myosin heavy chain"/>
    <property type="match status" value="1"/>
</dbReference>
<dbReference type="FunFam" id="1.20.5.340:FF:000006">
    <property type="entry name" value="Myosin heavy chain"/>
    <property type="match status" value="1"/>
</dbReference>
<dbReference type="FunFam" id="1.20.5.340:FF:000013">
    <property type="entry name" value="Myosin heavy chain"/>
    <property type="match status" value="1"/>
</dbReference>
<dbReference type="FunFam" id="1.20.5.370:FF:000001">
    <property type="entry name" value="Myosin heavy chain"/>
    <property type="match status" value="1"/>
</dbReference>
<dbReference type="FunFam" id="1.20.5.370:FF:000002">
    <property type="entry name" value="Myosin heavy chain"/>
    <property type="match status" value="1"/>
</dbReference>
<dbReference type="FunFam" id="1.20.5.370:FF:000003">
    <property type="entry name" value="Myosin heavy chain"/>
    <property type="match status" value="1"/>
</dbReference>
<dbReference type="FunFam" id="1.20.5.370:FF:000007">
    <property type="entry name" value="Myosin heavy chain"/>
    <property type="match status" value="1"/>
</dbReference>
<dbReference type="FunFam" id="1.20.5.370:FF:000008">
    <property type="entry name" value="Myosin heavy chain"/>
    <property type="match status" value="1"/>
</dbReference>
<dbReference type="FunFam" id="1.20.5.4820:FF:000001">
    <property type="entry name" value="Myosin heavy chain"/>
    <property type="match status" value="1"/>
</dbReference>
<dbReference type="FunFam" id="1.20.58.530:FF:000001">
    <property type="entry name" value="Myosin heavy chain"/>
    <property type="match status" value="1"/>
</dbReference>
<dbReference type="FunFam" id="2.30.30.360:FF:000001">
    <property type="entry name" value="Myosin heavy chain"/>
    <property type="match status" value="1"/>
</dbReference>
<dbReference type="FunFam" id="3.40.850.10:FF:000024">
    <property type="entry name" value="Myosin heavy chain, isoform J"/>
    <property type="match status" value="1"/>
</dbReference>
<dbReference type="FunFam" id="1.20.120.720:FF:000001">
    <property type="entry name" value="Myosin heavy chain, muscle"/>
    <property type="match status" value="1"/>
</dbReference>
<dbReference type="Gene3D" id="1.10.10.820">
    <property type="match status" value="1"/>
</dbReference>
<dbReference type="Gene3D" id="1.20.5.340">
    <property type="match status" value="5"/>
</dbReference>
<dbReference type="Gene3D" id="1.20.5.370">
    <property type="match status" value="4"/>
</dbReference>
<dbReference type="Gene3D" id="1.20.5.4820">
    <property type="match status" value="1"/>
</dbReference>
<dbReference type="Gene3D" id="1.20.58.530">
    <property type="match status" value="1"/>
</dbReference>
<dbReference type="Gene3D" id="6.10.250.2420">
    <property type="match status" value="1"/>
</dbReference>
<dbReference type="Gene3D" id="3.40.850.10">
    <property type="entry name" value="Kinesin motor domain"/>
    <property type="match status" value="1"/>
</dbReference>
<dbReference type="Gene3D" id="2.30.30.360">
    <property type="entry name" value="Myosin S1 fragment, N-terminal"/>
    <property type="match status" value="1"/>
</dbReference>
<dbReference type="Gene3D" id="1.20.120.720">
    <property type="entry name" value="Myosin VI head, motor domain, U50 subdomain"/>
    <property type="match status" value="1"/>
</dbReference>
<dbReference type="InterPro" id="IPR036961">
    <property type="entry name" value="Kinesin_motor_dom_sf"/>
</dbReference>
<dbReference type="InterPro" id="IPR001609">
    <property type="entry name" value="Myosin_head_motor_dom-like"/>
</dbReference>
<dbReference type="InterPro" id="IPR004009">
    <property type="entry name" value="Myosin_N"/>
</dbReference>
<dbReference type="InterPro" id="IPR008989">
    <property type="entry name" value="Myosin_S1_N"/>
</dbReference>
<dbReference type="InterPro" id="IPR002928">
    <property type="entry name" value="Myosin_tail"/>
</dbReference>
<dbReference type="InterPro" id="IPR036000">
    <property type="entry name" value="MYSc_Myh3"/>
</dbReference>
<dbReference type="InterPro" id="IPR027417">
    <property type="entry name" value="P-loop_NTPase"/>
</dbReference>
<dbReference type="InterPro" id="IPR014751">
    <property type="entry name" value="XRCC4-like_C"/>
</dbReference>
<dbReference type="PANTHER" id="PTHR45615">
    <property type="entry name" value="MYOSIN HEAVY CHAIN, NON-MUSCLE"/>
    <property type="match status" value="1"/>
</dbReference>
<dbReference type="PANTHER" id="PTHR45615:SF6">
    <property type="entry name" value="MYOSIN-3"/>
    <property type="match status" value="1"/>
</dbReference>
<dbReference type="Pfam" id="PF00063">
    <property type="entry name" value="Myosin_head"/>
    <property type="match status" value="1"/>
</dbReference>
<dbReference type="Pfam" id="PF02736">
    <property type="entry name" value="Myosin_N"/>
    <property type="match status" value="1"/>
</dbReference>
<dbReference type="Pfam" id="PF01576">
    <property type="entry name" value="Myosin_tail_1"/>
    <property type="match status" value="1"/>
</dbReference>
<dbReference type="PRINTS" id="PR00193">
    <property type="entry name" value="MYOSINHEAVY"/>
</dbReference>
<dbReference type="SMART" id="SM00242">
    <property type="entry name" value="MYSc"/>
    <property type="match status" value="1"/>
</dbReference>
<dbReference type="SUPFAM" id="SSF90257">
    <property type="entry name" value="Myosin rod fragments"/>
    <property type="match status" value="4"/>
</dbReference>
<dbReference type="SUPFAM" id="SSF52540">
    <property type="entry name" value="P-loop containing nucleoside triphosphate hydrolases"/>
    <property type="match status" value="1"/>
</dbReference>
<dbReference type="SUPFAM" id="SSF57997">
    <property type="entry name" value="Tropomyosin"/>
    <property type="match status" value="1"/>
</dbReference>
<dbReference type="PROSITE" id="PS50096">
    <property type="entry name" value="IQ"/>
    <property type="match status" value="1"/>
</dbReference>
<dbReference type="PROSITE" id="PS51456">
    <property type="entry name" value="MYOSIN_MOTOR"/>
    <property type="match status" value="1"/>
</dbReference>
<dbReference type="PROSITE" id="PS51844">
    <property type="entry name" value="SH3_LIKE"/>
    <property type="match status" value="1"/>
</dbReference>
<reference key="1">
    <citation type="journal article" date="1989" name="Nucleic Acids Res.">
        <title>Nucleotide sequence of full length human embryonic myosin heavy chain cDNA.</title>
        <authorList>
            <person name="Eller M.S."/>
            <person name="Stedman H.H."/>
            <person name="Sylvester J.E."/>
            <person name="Fertels S.H."/>
            <person name="Rubinstein N.A."/>
            <person name="Kelly A.M."/>
            <person name="Sarkar S."/>
        </authorList>
    </citation>
    <scope>NUCLEOTIDE SEQUENCE [MRNA]</scope>
    <scope>VARIANT THR-1192</scope>
</reference>
<reference key="2">
    <citation type="journal article" date="2006" name="Nature">
        <title>DNA sequence of human chromosome 17 and analysis of rearrangement in the human lineage.</title>
        <authorList>
            <person name="Zody M.C."/>
            <person name="Garber M."/>
            <person name="Adams D.J."/>
            <person name="Sharpe T."/>
            <person name="Harrow J."/>
            <person name="Lupski J.R."/>
            <person name="Nicholson C."/>
            <person name="Searle S.M."/>
            <person name="Wilming L."/>
            <person name="Young S.K."/>
            <person name="Abouelleil A."/>
            <person name="Allen N.R."/>
            <person name="Bi W."/>
            <person name="Bloom T."/>
            <person name="Borowsky M.L."/>
            <person name="Bugalter B.E."/>
            <person name="Butler J."/>
            <person name="Chang J.L."/>
            <person name="Chen C.-K."/>
            <person name="Cook A."/>
            <person name="Corum B."/>
            <person name="Cuomo C.A."/>
            <person name="de Jong P.J."/>
            <person name="DeCaprio D."/>
            <person name="Dewar K."/>
            <person name="FitzGerald M."/>
            <person name="Gilbert J."/>
            <person name="Gibson R."/>
            <person name="Gnerre S."/>
            <person name="Goldstein S."/>
            <person name="Grafham D.V."/>
            <person name="Grocock R."/>
            <person name="Hafez N."/>
            <person name="Hagopian D.S."/>
            <person name="Hart E."/>
            <person name="Norman C.H."/>
            <person name="Humphray S."/>
            <person name="Jaffe D.B."/>
            <person name="Jones M."/>
            <person name="Kamal M."/>
            <person name="Khodiyar V.K."/>
            <person name="LaButti K."/>
            <person name="Laird G."/>
            <person name="Lehoczky J."/>
            <person name="Liu X."/>
            <person name="Lokyitsang T."/>
            <person name="Loveland J."/>
            <person name="Lui A."/>
            <person name="Macdonald P."/>
            <person name="Major J.E."/>
            <person name="Matthews L."/>
            <person name="Mauceli E."/>
            <person name="McCarroll S.A."/>
            <person name="Mihalev A.H."/>
            <person name="Mudge J."/>
            <person name="Nguyen C."/>
            <person name="Nicol R."/>
            <person name="O'Leary S.B."/>
            <person name="Osoegawa K."/>
            <person name="Schwartz D.C."/>
            <person name="Shaw-Smith C."/>
            <person name="Stankiewicz P."/>
            <person name="Steward C."/>
            <person name="Swarbreck D."/>
            <person name="Venkataraman V."/>
            <person name="Whittaker C.A."/>
            <person name="Yang X."/>
            <person name="Zimmer A.R."/>
            <person name="Bradley A."/>
            <person name="Hubbard T."/>
            <person name="Birren B.W."/>
            <person name="Rogers J."/>
            <person name="Lander E.S."/>
            <person name="Nusbaum C."/>
        </authorList>
    </citation>
    <scope>NUCLEOTIDE SEQUENCE [LARGE SCALE GENOMIC DNA]</scope>
</reference>
<reference key="3">
    <citation type="journal article" date="1989" name="FEBS Lett.">
        <title>Human embryonic myosin heavy chain cDNA. Interspecies sequence conservation of the myosin rod, chromosomal locus and isoform specific transcription of the gene.</title>
        <authorList>
            <person name="Eller M.S."/>
            <person name="Stedman H.H."/>
            <person name="Sylvester J.E."/>
            <person name="Fertels S.H."/>
            <person name="Wu Q.-L."/>
            <person name="Raychowdhury M.K."/>
            <person name="Rubinstein N.A."/>
            <person name="Kelly A.M."/>
            <person name="Sarkar S."/>
        </authorList>
    </citation>
    <scope>NUCLEOTIDE SEQUENCE [MRNA] OF 774-1940</scope>
    <scope>VARIANT THR-1192</scope>
</reference>
<reference key="4">
    <citation type="journal article" date="1990" name="Eur. J. Biochem.">
        <title>Identification of three developmentally controlled isoforms of human myosin heavy chains.</title>
        <authorList>
            <person name="Bober E."/>
            <person name="Buchberger-Seidl A."/>
            <person name="Braun T."/>
            <person name="Singh S."/>
            <person name="Goedde H.W."/>
            <person name="Arnold H.H."/>
        </authorList>
    </citation>
    <scope>NUCLEOTIDE SEQUENCE [MRNA] OF 856-1940</scope>
    <scope>VARIANT THR-1192</scope>
    <source>
        <tissue>Skeletal muscle</tissue>
    </source>
</reference>
<reference key="5">
    <citation type="journal article" date="1989" name="Nucleic Acids Res.">
        <title>Expression and DNA sequence analysis of a human embryonic skeletal muscle myosin heavy chain gene.</title>
        <authorList>
            <person name="Karsch-Mizrachi I."/>
            <person name="Travis M."/>
            <person name="Blau H."/>
            <person name="Leinwand L.A."/>
        </authorList>
    </citation>
    <scope>NUCLEOTIDE SEQUENCE [MRNA] OF 856-1940</scope>
    <scope>VARIANT THR-1192</scope>
</reference>
<reference key="6">
    <citation type="journal article" date="2006" name="Nat. Genet.">
        <title>Mutations in embryonic myosin heavy chain (MYH3) cause Freeman-Sheldon syndrome and Sheldon-Hall syndrome.</title>
        <authorList>
            <person name="Toydemir R.M."/>
            <person name="Rutherford A."/>
            <person name="Whitby F.G."/>
            <person name="Jorde L.B."/>
            <person name="Carey J.C."/>
            <person name="Bamshad M.J."/>
        </authorList>
    </citation>
    <scope>INVOLVEMENT IN DA2A</scope>
    <scope>INVOLVEMENT IN DA2B3</scope>
    <scope>VARIANTS DA2A ILE-178; GLY-498; SER-583; CYS-672; HIS-672 AND ASP-825</scope>
    <scope>VARIANTS DA2B3 ILE-178; PHE-261; CYS-292; LYS-375; TYR-517; VAL-769 AND GLU-838; LEU-841 DEL</scope>
    <scope>VARIANTS ALA-1622 AND VAL-1637</scope>
</reference>
<reference key="7">
    <citation type="journal article" date="2008" name="Arch. Neurol.">
        <title>Embryonic myosin heavy-chain mutations cause distal arthrogryposis and developmental myosin myopathy that persists postnatally.</title>
        <authorList>
            <person name="Tajsharghi H."/>
            <person name="Kimber E."/>
            <person name="Kroksmark A.K."/>
            <person name="Jerre R."/>
            <person name="Tulinius M."/>
            <person name="Oldfors A."/>
        </authorList>
    </citation>
    <scope>INVOLVEMENT IN DA2B3</scope>
    <scope>VARIANT DA2A ILE-178</scope>
    <scope>VARIANTS DA2B3 THR-234 AND GLY-462</scope>
</reference>
<reference key="8">
    <citation type="journal article" date="2008" name="Arch. Neurol.">
        <authorList>
            <person name="Tajsharghi H."/>
            <person name="Kimber E."/>
            <person name="Kroksmark A.K."/>
            <person name="Jerre R."/>
            <person name="Tulinius M."/>
            <person name="Oldfors A."/>
        </authorList>
    </citation>
    <scope>ERRATUM OF PUBMED:18695058</scope>
</reference>
<reference key="9">
    <citation type="journal article" date="2015" name="Am. J. Hum. Genet.">
        <title>Autosomal-dominant multiple pterygium syndrome is caused by mutations in MYH3.</title>
        <authorList>
            <consortium name="University of Washington Center for Mendelian Genomics"/>
            <person name="Chong J.X."/>
            <person name="Burrage L.C."/>
            <person name="Beck A.E."/>
            <person name="Marvin C.T."/>
            <person name="McMillin M.J."/>
            <person name="Shively K.M."/>
            <person name="Harrell T.M."/>
            <person name="Buckingham K.J."/>
            <person name="Bacino C.A."/>
            <person name="Jain M."/>
            <person name="Alanay Y."/>
            <person name="Berry S.A."/>
            <person name="Carey J.C."/>
            <person name="Gibbs R.A."/>
            <person name="Lee B.H."/>
            <person name="Krakow D."/>
            <person name="Shendure J."/>
            <person name="Nickerson D.A."/>
            <person name="Bamshad M.J."/>
        </authorList>
    </citation>
    <scope>INVOLVEMENT IN CPSFS1A</scope>
    <scope>TISSUE SPECIFICITY</scope>
    <scope>VARIANTS CPSFS1A SER-243 DEL; ASN-1072 INS AND PRO-1075</scope>
    <scope>CLASSIFICATION OF VARIANTS ALA-1622 AND VAL-1637</scope>
</reference>
<reference key="10">
    <citation type="journal article" date="2016" name="Eur. J. Hum. Genet.">
        <title>Protein-altering MYH3 variants are associated with a spectrum of phenotypes extending to spondylocarpotarsal synostosis syndrome.</title>
        <authorList>
            <person name="Carapito R."/>
            <person name="Goldenberg A."/>
            <person name="Paul N."/>
            <person name="Pichot A."/>
            <person name="David A."/>
            <person name="Hamel A."/>
            <person name="Dumant-Forest C."/>
            <person name="Leroux J."/>
            <person name="Ory B."/>
            <person name="Isidor B."/>
            <person name="Bahram S."/>
        </authorList>
    </citation>
    <scope>INVOLVEMENT IN CPSFS1A</scope>
    <scope>VARIANTS CPSFS1A ARG-333 AND PRO-1344</scope>
</reference>
<reference key="11">
    <citation type="journal article" date="2018" name="Am. J. Hum. Genet.">
        <title>Recessive spondylocarpotarsal synostosis syndrome due to compound heterozygosity for variants in MYH3.</title>
        <authorList>
            <person name="Cameron-Christie S.R."/>
            <person name="Wells C.F."/>
            <person name="Simon M."/>
            <person name="Wessels M."/>
            <person name="Tang C.Z.N."/>
            <person name="Wei W."/>
            <person name="Takei R."/>
            <person name="Aarts-Tesselaar C."/>
            <person name="Sandaradura S."/>
            <person name="Sillence D.O."/>
            <person name="Cordier M.P."/>
            <person name="Veenstra-Knol H.E."/>
            <person name="Cassina M."/>
            <person name="Ludwig K."/>
            <person name="Trevisson E."/>
            <person name="Bahlo M."/>
            <person name="Markie D.M."/>
            <person name="Jenkins Z.A."/>
            <person name="Robertson S.P."/>
        </authorList>
    </citation>
    <scope>INVOLVEMENT IN CPSFS1B</scope>
    <scope>VARIANT CPSFS1B 47-TYR--GLU-1940 DEL</scope>
</reference>
<reference key="12">
    <citation type="journal article" date="2018" name="Am. J. Med. Genet. A">
        <title>A novel pathogenic MYH3 mutation in a child with Sheldon-Hall syndrome and vertebral fusions.</title>
        <authorList>
            <person name="Scala M."/>
            <person name="Accogli A."/>
            <person name="De Grandis E."/>
            <person name="Allegri A."/>
            <person name="Bagowski C.P."/>
            <person name="Shoukier M."/>
            <person name="Maghnie M."/>
            <person name="Capra V."/>
        </authorList>
    </citation>
    <scope>VARIANT CPSFS1A VAL-287</scope>
</reference>
<protein>
    <recommendedName>
        <fullName>Myosin-3</fullName>
    </recommendedName>
    <alternativeName>
        <fullName>Muscle embryonic myosin heavy chain</fullName>
    </alternativeName>
    <alternativeName>
        <fullName>Myosin heavy chain 3</fullName>
    </alternativeName>
    <alternativeName>
        <fullName>Myosin heavy chain, fast skeletal muscle, embryonic</fullName>
    </alternativeName>
    <alternativeName>
        <fullName>SMHCE</fullName>
    </alternativeName>
</protein>
<gene>
    <name type="primary">MYH3</name>
</gene>
<name>MYH3_HUMAN</name>
<sequence length="1940" mass="223905">MSSDTEMEVFGIAAPFLRKSEKERIEAQNQPFDAKTYCFVVDSKEEYAKGKIKSSQDGKVTVETEDNRTLVVKPEDVYAMNPPKFDRIEDMAMLTHLNEPAVLYNLKDRYTSWMIYTYSGLFCVTVNPYKWLPVYNPEVVEGYRGKKRQEAPPHIFSISDNAYQFMLTDRENQSILITGESGAGKTVNTKRVIQYFATIAATGDLAKKKDSKMKGTLEDQIISANPLLEAFGNAKTVRNDNSSRFGKFIRIHFGTTGKLASADIETYLLEKSRVTFQLKAERSYHIFYQILSNKKPELIELLLITTNPYDYPFISQGEILVASIDDAEELLATDSAIDILGFTPEEKSGLYKLTGAVMHYGNMKFKQKQREEQAEPDGTEVADKTAYLMGLNSSDLLKALCFPRVKVGNEYVTKGQTVDQVHHAVNALSKSVYEKLFLWMVTRINQQLDTKLPRQHFIGVLDIAGFEIFEYNSLEQLCINFTNEKLQQFFNHHMFVLEQEEYKKEGIEWTFIDFGMDLAACIELIEKPMGIFSILEEECMFPKATDTSFKNKLYDQHLGKSNNFQKPKVVKGRAEAHFSLIHYAGTVDYSVSGWLEKNKDPLNETVVGLYQKSSNRLLAHLYATFATADADSGKKKVAKKKGSSFQTVSALFRENLNKLMSNLRTTHPHFVRCIIPNETKTPGAMEHSLVLHQLRCNGVLEGIRICRKGFPNRILYGDFKQRYRVLNASAIPEGQFIDSKKACEKLLASIDIDHTQYKFGHTKVFFKAGLLGTLEEMRDDRLAKLITRTQAVCRGFLMRVEFQKMVQRRESIFCIQYNIRSFMNVKHWPWMKLFFKIKPLLKSAETEKEMATMKEEFQKTKDELAKSEAKRKELEEKLVTLVQEKNDLQLQVQAESENLLDAEERCDQLIKAKFQLEAKIKEVTERAEDEEEINAELTAKKRKLEDECSELKKDIDDLELTLAKVEKEKHATENKVKNLTEELSGLDETIAKLTREKKALQEAHQQALDDLQAEEDKVNSLNKTKSKLEQQVEDLESSLEQEKKLRVDLERNKRKLEGDLKLAQESILDLENDKQQLDERLKKKDFEYCQLQSKVEDEQTLGLQFQKKIKELQARIEELEEEIEAERATRAKTEKQRSDYARELEELSERLEEAGGVTSTQIELNKKREAEFLKLRRDLEEATLQHEAMVAALRKKHADSVAELGEQIDNLQRVKQKLEKEKSEFKLEIDDLSSSMESVSKSKANLEKICRTLEDQLSEARGKNEEIQRSLSELTTQKSRLQTEAGELSRQLEEKESIVSQLSRSKQAFTQQTEELKRQLEEENKAKNALAHALQSSRHDCDLLREQYEEEQEGKAELQRALSKANSEVAQWRTKYETDAIQRTEELEEAKKKLAQRLQDSEEQVEAVNAKCASLEKTKQRLQGEVEDLMVDVERANSLAAALDKKQRNFDKVLAEWKTKCEESQAELEASLKESRSLSTELFKLKNAYEEALDQLETVKRENKNLEQEIADLTEQIAENGKTIHELEKSRKQIELEKADIQLALEEAEAALEHEEAKILRIQLELTQVKSEIDRKIAEKDEEIEQLKRNYQRTVETMQSALDAEVRSRNEAIRLKKKMEGDLNEIEIQLSHANRQAAETLKHLRSVQGQLKDTQLHLDDALRGQEDLKEQLAIVERRANLLQAEVEELRATLEQTERARKLAEQELLDSNERVQLLHTQNTSLIHTKKKLETDLMQLQSEVEDASRDARNAEEKAKKAITDAAMMAEELKKEQDTSAHLERMKKNLEQTVKDLQHRLDEAEQLALKGGKKQIQKLETRIRELEFELEGEQKKNTESVKGLRKYERRVKELTYQSEEDRKNVLRLQDLVDKLQVKVKSYKRQAEEADEQANAHLTKFRKAQHELEEAEERADIAESQVNKLRAKTRDFTSSRMVVHESEE</sequence>
<keyword id="KW-0009">Actin-binding</keyword>
<keyword id="KW-0067">ATP-binding</keyword>
<keyword id="KW-0112">Calmodulin-binding</keyword>
<keyword id="KW-0175">Coiled coil</keyword>
<keyword id="KW-0963">Cytoplasm</keyword>
<keyword id="KW-0225">Disease variant</keyword>
<keyword id="KW-0488">Methylation</keyword>
<keyword id="KW-0505">Motor protein</keyword>
<keyword id="KW-0514">Muscle protein</keyword>
<keyword id="KW-0518">Myosin</keyword>
<keyword id="KW-0547">Nucleotide-binding</keyword>
<keyword id="KW-1267">Proteomics identification</keyword>
<keyword id="KW-1185">Reference proteome</keyword>
<keyword id="KW-0787">Thick filament</keyword>
<proteinExistence type="evidence at protein level"/>
<comment type="function">
    <text>Muscle contraction.</text>
</comment>
<comment type="subunit">
    <text>Muscle myosin is a hexameric protein that consists of 2 heavy chain subunits (MHC), 2 alkali light chain subunits (MLC) and 2 regulatory light chain subunits (MLC-2).</text>
</comment>
<comment type="subcellular location">
    <subcellularLocation>
        <location>Cytoplasm</location>
        <location>Myofibril</location>
    </subcellularLocation>
    <text>Thick filaments of the myofibrils.</text>
</comment>
<comment type="tissue specificity">
    <text evidence="8">Expressed in fetal bone, thymus, placenta, heart, brain, and liver.</text>
</comment>
<comment type="developmental stage">
    <text>Abundantly present in fetal skeletal muscle and not present or barely detectable in heart and adult skeletal muscle.</text>
</comment>
<comment type="domain">
    <text>The rodlike tail sequence is highly repetitive, showing cycles of a 28-residue repeat pattern composed of 4 heptapeptides, characteristic for alpha-helical coiled coils.</text>
</comment>
<comment type="domain">
    <text evidence="16">Limited proteolysis of myosin heavy chain produces 1 light meromyosin (LMM) and 1 heavy meromyosin (HMM). HMM can be further cleaved into 2 globular subfragments (S1) and 1 rod-shaped subfragment (S2).</text>
</comment>
<comment type="disease" evidence="5 7">
    <disease id="DI-01492">
        <name>Arthrogryposis, distal, 2A</name>
        <acronym>DA2A</acronym>
        <description>A form of distal arthrogryposis, a disease characterized by congenital joint contractures that mainly involve two or more distal parts of the limbs, in the absence of a primary neurological or muscle disease. DA2A is characterized by contractures of the hands and feet, oropharyngeal abnormalities, scoliosis, and a distinctive face that includes a very small oral orifice, puckered lips, and a H-shaped dimple of the chin.</description>
        <dbReference type="MIM" id="193700"/>
    </disease>
    <text>The disease is caused by variants affecting the gene represented in this entry.</text>
</comment>
<comment type="disease" evidence="5 7">
    <disease id="DI-05570">
        <name>Arthrogryposis, distal, 2B3</name>
        <acronym>DA2B3</acronym>
        <description>A form of distal arthrogryposis, a disease characterized by congenital joint contractures that mainly involve two or more distal parts of the limbs, in the absence of a primary neurological or muscle disease. Distal arthrogryposis type 2 is characterized by contractures of the hands and feet, and a distinctive face characterized by prominent nasolabial folds, small mouth and downslanting palpebral fissures. DA2B3 inheritance is autosomal dominant.</description>
        <dbReference type="MIM" id="618436"/>
    </disease>
    <text>The disease is caused by variants affecting the gene represented in this entry.</text>
</comment>
<comment type="disease" evidence="8 10 13">
    <disease id="DI-05625">
        <name>Contractures, pterygia, and spondylocarpotarsal fusion syndrome 1A</name>
        <acronym>CPSFS1A</acronym>
        <description>An autosomal dominant disease characterized by contractures of proximal and distal joints, pterygia involving the neck, axillae, elbows, and/or knees, as well as variable vertebral, carpal, and tarsal fusions and short stature. Progression of vertebral fusions has been observed, and inter- and intrafamilial variability has been reported.</description>
        <dbReference type="MIM" id="178110"/>
    </disease>
    <text>The disease is caused by variants affecting the gene represented in this entry.</text>
</comment>
<comment type="disease" evidence="14">
    <disease id="DI-05594">
        <name>Contractures, pterygia, and spondylocarpotarsal fusion syndrome 1B</name>
        <acronym>CPSFS1B</acronym>
        <description>An autosomal recessive disease characterized by contractures affecting proximal and distal joints, vertebral fusions and scoliosis, carpal and tarsal fusions as well as webbing of the skin (pterygium) involving the neck, elbows, fingers, and/or knees. Other features include facial dysmorphism, short neck, and absent finger flexion creases. Inter- and intrafamilial variability has been observed.</description>
        <dbReference type="MIM" id="618469"/>
    </disease>
    <text>The disease is caused by variants affecting the gene represented in this entry.</text>
</comment>
<comment type="similarity">
    <text evidence="16">Belongs to the TRAFAC class myosin-kinesin ATPase superfamily. Myosin family.</text>
</comment>
<comment type="caution">
    <text evidence="16">Represents a conventional myosin. This protein should not be confused with the unconventional myosin-3 (MYO3).</text>
</comment>
<comment type="caution">
    <text evidence="5 15">Variants Ala-1622 and Val-1637 have been originally reported as DA2B3 pathogenic mutations (PubMed:16642020). These variants are now thought to be polymorphisms on the basis of additional family information and frequencies in large databases of control populations (PubMed:25957469).</text>
</comment>
<feature type="chain" id="PRO_0000123394" description="Myosin-3">
    <location>
        <begin position="1"/>
        <end position="1940"/>
    </location>
</feature>
<feature type="domain" description="Myosin N-terminal SH3-like" evidence="4">
    <location>
        <begin position="33"/>
        <end position="82"/>
    </location>
</feature>
<feature type="domain" description="Myosin motor" evidence="3">
    <location>
        <begin position="86"/>
        <end position="779"/>
    </location>
</feature>
<feature type="domain" description="IQ" evidence="2">
    <location>
        <begin position="782"/>
        <end position="811"/>
    </location>
</feature>
<feature type="region of interest" description="Actin-binding">
    <location>
        <begin position="656"/>
        <end position="678"/>
    </location>
</feature>
<feature type="region of interest" description="Actin-binding">
    <location>
        <begin position="758"/>
        <end position="772"/>
    </location>
</feature>
<feature type="coiled-coil region" evidence="1">
    <location>
        <begin position="840"/>
        <end position="1933"/>
    </location>
</feature>
<feature type="binding site" evidence="1">
    <location>
        <begin position="179"/>
        <end position="186"/>
    </location>
    <ligand>
        <name>ATP</name>
        <dbReference type="ChEBI" id="CHEBI:30616"/>
    </ligand>
</feature>
<feature type="modified residue" description="N6,N6,N6-trimethyllysine" evidence="1">
    <location>
        <position position="130"/>
    </location>
</feature>
<feature type="sequence variant" id="VAR_082274" description="In CPSFS1B." evidence="14">
    <location>
        <begin position="47"/>
        <end position="1940"/>
    </location>
</feature>
<feature type="sequence variant" id="VAR_030370" description="In DA2A and DA2B3; dbSNP:rs121913619." evidence="5 7">
    <original>T</original>
    <variation>I</variation>
    <location>
        <position position="178"/>
    </location>
</feature>
<feature type="sequence variant" id="VAR_082275" description="In DA2B3; dbSNP:rs121913623." evidence="7">
    <original>A</original>
    <variation>T</variation>
    <location>
        <position position="234"/>
    </location>
</feature>
<feature type="sequence variant" id="VAR_074668" description="In CPSFS1A; dbSNP:rs1555527166." evidence="8">
    <location>
        <position position="243"/>
    </location>
</feature>
<feature type="sequence variant" id="VAR_030371" description="In DA2B3; dbSNP:rs1597490381." evidence="5">
    <original>S</original>
    <variation>F</variation>
    <location>
        <position position="261"/>
    </location>
</feature>
<feature type="sequence variant" id="VAR_082276" description="In CPSFS1A; dbSNP:rs1567560080." evidence="13">
    <original>F</original>
    <variation>V</variation>
    <location>
        <position position="287"/>
    </location>
</feature>
<feature type="sequence variant" id="VAR_030372" description="In DA2B3; uncertain significance; dbSNP:rs139480342." evidence="5">
    <original>S</original>
    <variation>C</variation>
    <location>
        <position position="292"/>
    </location>
</feature>
<feature type="sequence variant" id="VAR_082277" description="In CPSFS1A; dbSNP:rs1567559562." evidence="10">
    <original>T</original>
    <variation>R</variation>
    <location>
        <position position="333"/>
    </location>
</feature>
<feature type="sequence variant" id="VAR_030373" description="In DA2B3; uncertain significance; dbSNP:rs121913621." evidence="5">
    <original>E</original>
    <variation>K</variation>
    <location>
        <position position="375"/>
    </location>
</feature>
<feature type="sequence variant" id="VAR_082278" description="In DA2B3; uncertain significance; dbSNP:rs121913622." evidence="7">
    <original>D</original>
    <variation>G</variation>
    <location>
        <position position="462"/>
    </location>
</feature>
<feature type="sequence variant" id="VAR_030374" description="In DA2A." evidence="5">
    <original>E</original>
    <variation>G</variation>
    <location>
        <position position="498"/>
    </location>
</feature>
<feature type="sequence variant" id="VAR_030375" description="In DA2B3; uncertain significance; dbSNP:rs1597488252." evidence="5">
    <original>D</original>
    <variation>Y</variation>
    <location>
        <position position="517"/>
    </location>
</feature>
<feature type="sequence variant" id="VAR_030376" description="In DA2A; dbSNP:rs1597488038." evidence="5">
    <original>Y</original>
    <variation>S</variation>
    <location>
        <position position="583"/>
    </location>
</feature>
<feature type="sequence variant" id="VAR_030377" description="In DA2A; dbSNP:rs121913618." evidence="5">
    <original>R</original>
    <variation>C</variation>
    <location>
        <position position="672"/>
    </location>
</feature>
<feature type="sequence variant" id="VAR_030378" description="In DA2A; dbSNP:rs121913617." evidence="5">
    <original>R</original>
    <variation>H</variation>
    <location>
        <position position="672"/>
    </location>
</feature>
<feature type="sequence variant" id="VAR_030379" description="In DA2B3." evidence="5">
    <original>G</original>
    <variation>V</variation>
    <location>
        <position position="769"/>
    </location>
</feature>
<feature type="sequence variant" id="VAR_030380" description="In DA2A; dbSNP:rs121913620." evidence="5">
    <original>V</original>
    <variation>D</variation>
    <location>
        <position position="825"/>
    </location>
</feature>
<feature type="sequence variant" id="VAR_030381" description="In DA2B3." evidence="5">
    <original>K</original>
    <variation>E</variation>
    <location>
        <position position="838"/>
    </location>
</feature>
<feature type="sequence variant" id="VAR_030382" description="In DA2B3." evidence="5">
    <location>
        <position position="841"/>
    </location>
</feature>
<feature type="sequence variant" id="VAR_056173" description="In dbSNP:rs34088014.">
    <original>A</original>
    <variation>V</variation>
    <location>
        <position position="1003"/>
    </location>
</feature>
<feature type="sequence variant" id="VAR_074669" description="In CPSFS1A." evidence="8">
    <original>N</original>
    <variation>NN</variation>
    <location>
        <position position="1072"/>
    </location>
</feature>
<feature type="sequence variant" id="VAR_074670" description="In CPSFS1A; dbSNP:rs796051884." evidence="8">
    <original>Q</original>
    <variation>P</variation>
    <location>
        <position position="1075"/>
    </location>
</feature>
<feature type="sequence variant" id="VAR_030196" description="In dbSNP:rs12941197.">
    <original>R</original>
    <variation>C</variation>
    <location>
        <position position="1137"/>
    </location>
</feature>
<feature type="sequence variant" id="VAR_030197" description="In dbSNP:rs2285477." evidence="6 9 11 12">
    <original>A</original>
    <variation>T</variation>
    <location>
        <position position="1192"/>
    </location>
</feature>
<feature type="sequence variant" id="VAR_056174" description="In dbSNP:rs35230241.">
    <original>T</original>
    <variation>I</variation>
    <location>
        <position position="1313"/>
    </location>
</feature>
<feature type="sequence variant" id="VAR_082279" description="In CPSFS1A; uncertain significance; dbSNP:rs1567553806." evidence="10">
    <original>L</original>
    <variation>P</variation>
    <location>
        <position position="1344"/>
    </location>
</feature>
<feature type="sequence variant" id="VAR_030383" description="Originally found in DA2B3 patients; dbSNP:rs1446303362." evidence="5 15">
    <original>D</original>
    <variation>A</variation>
    <location>
        <position position="1622"/>
    </location>
</feature>
<feature type="sequence variant" id="VAR_030384" description="Originally found in DA2B3 patients; dbSNP:rs34165480." evidence="5 15">
    <original>A</original>
    <variation>V</variation>
    <location>
        <position position="1637"/>
    </location>
</feature>
<feature type="sequence conflict" description="In Ref. 1; CAA32167." evidence="16" ref="1">
    <original>A</original>
    <variation>R</variation>
    <location>
        <position position="327"/>
    </location>
</feature>
<feature type="sequence conflict" description="In Ref. 1; CAA32167." evidence="16" ref="1">
    <original>P</original>
    <variation>L</variation>
    <location>
        <position position="732"/>
    </location>
</feature>
<feature type="sequence conflict" description="In Ref. 4; CAA35942." evidence="16" ref="4">
    <original>A</original>
    <variation>G</variation>
    <location>
        <position position="1331"/>
    </location>
</feature>
<feature type="sequence conflict" description="In Ref. 1; CAA32167 and 3; CAA31492." evidence="16" ref="1 3">
    <original>KK</original>
    <variation>QE</variation>
    <location>
        <begin position="1391"/>
        <end position="1392"/>
    </location>
</feature>
<feature type="sequence conflict" description="In Ref. 4; CAA35942." evidence="16" ref="4">
    <original>SR</original>
    <variation>RA</variation>
    <location>
        <begin position="1608"/>
        <end position="1609"/>
    </location>
</feature>
<feature type="sequence conflict" description="In Ref. 3; CAA31492." evidence="16" ref="3">
    <original>RG</original>
    <variation>QT</variation>
    <location>
        <begin position="1663"/>
        <end position="1664"/>
    </location>
</feature>
<evidence type="ECO:0000255" key="1"/>
<evidence type="ECO:0000255" key="2">
    <source>
        <dbReference type="PROSITE-ProRule" id="PRU00116"/>
    </source>
</evidence>
<evidence type="ECO:0000255" key="3">
    <source>
        <dbReference type="PROSITE-ProRule" id="PRU00782"/>
    </source>
</evidence>
<evidence type="ECO:0000255" key="4">
    <source>
        <dbReference type="PROSITE-ProRule" id="PRU01190"/>
    </source>
</evidence>
<evidence type="ECO:0000269" key="5">
    <source>
    </source>
</evidence>
<evidence type="ECO:0000269" key="6">
    <source>
    </source>
</evidence>
<evidence type="ECO:0000269" key="7">
    <source>
    </source>
</evidence>
<evidence type="ECO:0000269" key="8">
    <source>
    </source>
</evidence>
<evidence type="ECO:0000269" key="9">
    <source>
    </source>
</evidence>
<evidence type="ECO:0000269" key="10">
    <source>
    </source>
</evidence>
<evidence type="ECO:0000269" key="11">
    <source>
    </source>
</evidence>
<evidence type="ECO:0000269" key="12">
    <source>
    </source>
</evidence>
<evidence type="ECO:0000269" key="13">
    <source>
    </source>
</evidence>
<evidence type="ECO:0000269" key="14">
    <source>
    </source>
</evidence>
<evidence type="ECO:0000303" key="15">
    <source>
    </source>
</evidence>
<evidence type="ECO:0000305" key="16"/>